<protein>
    <recommendedName>
        <fullName>Syndecan-3</fullName>
        <shortName>SYND3</shortName>
    </recommendedName>
    <alternativeName>
        <fullName>N-syndecan</fullName>
    </alternativeName>
    <alternativeName>
        <fullName>Neuroglycan</fullName>
    </alternativeName>
</protein>
<organism>
    <name type="scientific">Rattus norvegicus</name>
    <name type="common">Rat</name>
    <dbReference type="NCBI Taxonomy" id="10116"/>
    <lineage>
        <taxon>Eukaryota</taxon>
        <taxon>Metazoa</taxon>
        <taxon>Chordata</taxon>
        <taxon>Craniata</taxon>
        <taxon>Vertebrata</taxon>
        <taxon>Euteleostomi</taxon>
        <taxon>Mammalia</taxon>
        <taxon>Eutheria</taxon>
        <taxon>Euarchontoglires</taxon>
        <taxon>Glires</taxon>
        <taxon>Rodentia</taxon>
        <taxon>Myomorpha</taxon>
        <taxon>Muroidea</taxon>
        <taxon>Muridae</taxon>
        <taxon>Murinae</taxon>
        <taxon>Rattus</taxon>
    </lineage>
</organism>
<sequence>MKPGPPRRGTAQGQRVDTATHGPGARGLLLPPLLLLLLAGRAAGAQRWRNENFERPVDLEGSGDDDSFPDDELDDLYSGSGSGYFEQESGLETAMRFIPDIALAAPTAPAMLPTTVIQPVDTPFEELLSEHPGPEPVTSPPLVTEVTEVVEEPSQRATTISTTTSTTAATTTGAPTMATAPATAATTAPSTPAAPPATATTADIRTTGIQGLLPLPLTTAATAKATTPAVPSPPTTVTTLDTEAPTPRLVNTATSRPRALPRPVTTQEPEVAERSTLPLGTTAPGPTEVAQTPTPESLLTTTQDEPEVPVSGGPSGDFELQEETTQPDTANEVVAVEGAAAKPSPPLGTLPKGARPGLGLHDNAIDSGSSAAQLPQKSILERKEVLVAVIVGGVVGALFAAFLVTLLIYRMKKKDEGSYTLEEPKQASVTYQKPDKQEEFYA</sequence>
<comment type="function">
    <text evidence="1">Cell surface proteoglycan that may bear heparan sulfate. May have a role in the organization of cell shape by affecting the actin cytoskeleton, possibly by transferring signals from the cell surface in a sugar-dependent mechanism (By similarity).</text>
</comment>
<comment type="subunit">
    <text evidence="1 2 5 6 7">Interacts with TIAM1 (By similarity). Interacts (via heparan sulfate chains) with PTN; this interaction mediates the neurite outgrowth-promoting signal from PTN to the cytoskeleton of growing neurites; this interaction mediates osteoblast recruitment (PubMed:8175719, PubMed:9817766). Interacts with MDK; this interaction induces SDC3 clustering; this interaction induces neuronal cell adhesion and neurite outgrowth (PubMed:9089390).</text>
</comment>
<comment type="interaction">
    <interactant intactId="EBI-1173159">
        <id>P33671</id>
    </interactant>
    <interactant intactId="EBI-1173032">
        <id>P34900</id>
        <label>Sdc2</label>
    </interactant>
    <organismsDiffer>false</organismsDiffer>
    <experiments>2</experiments>
</comment>
<comment type="subcellular location">
    <subcellularLocation>
        <location>Cell membrane</location>
        <topology>Single-pass type I membrane protein</topology>
    </subcellularLocation>
</comment>
<comment type="tissue specificity">
    <text>High levels in neonatal brain, heart, and Schwann cells, barely detectable in neonatal or adult liver, or adult brain.</text>
</comment>
<comment type="developmental stage">
    <text>Higher levels in developing tissues.</text>
</comment>
<comment type="PTM">
    <text evidence="8">O-glycosylated within the Thr/Ser-rich region which could interact with lectin domains on other molecules.</text>
</comment>
<comment type="similarity">
    <text evidence="8">Belongs to the syndecan proteoglycan family.</text>
</comment>
<evidence type="ECO:0000250" key="1"/>
<evidence type="ECO:0000250" key="2">
    <source>
        <dbReference type="UniProtKB" id="O75056"/>
    </source>
</evidence>
<evidence type="ECO:0000255" key="3"/>
<evidence type="ECO:0000256" key="4">
    <source>
        <dbReference type="SAM" id="MobiDB-lite"/>
    </source>
</evidence>
<evidence type="ECO:0000269" key="5">
    <source>
    </source>
</evidence>
<evidence type="ECO:0000269" key="6">
    <source>
    </source>
</evidence>
<evidence type="ECO:0000269" key="7">
    <source>
    </source>
</evidence>
<evidence type="ECO:0000305" key="8"/>
<accession>P33671</accession>
<accession>P97614</accession>
<keyword id="KW-1003">Cell membrane</keyword>
<keyword id="KW-0325">Glycoprotein</keyword>
<keyword id="KW-0357">Heparan sulfate</keyword>
<keyword id="KW-0472">Membrane</keyword>
<keyword id="KW-0597">Phosphoprotein</keyword>
<keyword id="KW-0654">Proteoglycan</keyword>
<keyword id="KW-1185">Reference proteome</keyword>
<keyword id="KW-0732">Signal</keyword>
<keyword id="KW-0812">Transmembrane</keyword>
<keyword id="KW-1133">Transmembrane helix</keyword>
<reference key="1">
    <citation type="submission" date="1996-07" db="EMBL/GenBank/DDBJ databases">
        <title>Cloning of rat and mouse syndecan-3 cDNAs.</title>
        <authorList>
            <person name="Kung C.E."/>
            <person name="Deuel T.F."/>
        </authorList>
    </citation>
    <scope>NUCLEOTIDE SEQUENCE [MRNA]</scope>
    <source>
        <strain>Sprague-Dawley</strain>
    </source>
</reference>
<reference key="2">
    <citation type="journal article" date="1997" name="J. Biol. Chem.">
        <title>cDNA cloning, genomic organization, and in vivo expression of rat N-syndecan.</title>
        <authorList>
            <person name="Carey D.J."/>
            <person name="Conner K."/>
            <person name="Asundi V.K."/>
            <person name="O'Mahony D.J."/>
            <person name="Stahl R.C."/>
            <person name="Showalter L."/>
            <person name="Cizmeci-Smith G."/>
            <person name="Hartman J."/>
            <person name="Rothblum L.I."/>
        </authorList>
    </citation>
    <scope>NUCLEOTIDE SEQUENCE [MRNA]</scope>
</reference>
<reference key="3">
    <citation type="journal article" date="1992" name="J. Cell Biol.">
        <title>Molecular cloning and characterization of N-syndecan, a novel transmembrane heparan sulfate proteoglycan.</title>
        <authorList>
            <person name="Carey D.J."/>
            <person name="Evans D.M."/>
            <person name="Stahl R.C."/>
            <person name="Asundi V.K."/>
            <person name="Conner K.J."/>
            <person name="Garbes P."/>
            <person name="Cizmeci-Smith G."/>
        </authorList>
    </citation>
    <scope>NUCLEOTIDE SEQUENCE [MRNA] OF 90-442</scope>
    <source>
        <strain>Sprague-Dawley</strain>
        <tissue>Schwann cell</tissue>
    </source>
</reference>
<reference key="4">
    <citation type="journal article" date="1994" name="J. Biol. Chem.">
        <title>Isolation of a neuronal cell surface receptor of heparin binding growth-associated molecule (HB-GAM). Identification as N-syndecan (syndecan-3).</title>
        <authorList>
            <person name="Raulo E."/>
            <person name="Chernousov M.A."/>
            <person name="Carey D.J."/>
            <person name="Nolo R."/>
            <person name="Rauvala H."/>
        </authorList>
    </citation>
    <scope>INTERACTION WITH PTN</scope>
</reference>
<reference key="5">
    <citation type="journal article" date="1997" name="J. Biochem.">
        <title>Expression of syndecan-1 and -3 during embryogenesis of the central nervous system in relation to binding with midkine.</title>
        <authorList>
            <person name="Nakanishi T."/>
            <person name="Kadomatsu K."/>
            <person name="Okamoto T."/>
            <person name="Ichihara-Tanaka K."/>
            <person name="Kojima T."/>
            <person name="Saito H."/>
            <person name="Tomoda Y."/>
            <person name="Muramatsu T."/>
        </authorList>
    </citation>
    <scope>INTERACTION WITH MDK</scope>
</reference>
<reference key="6">
    <citation type="journal article" date="1998" name="J. Cell Biol.">
        <title>Osteoblast recruitment and bone formation enhanced by cell matrix-associated heparin-binding growth-associated molecule (HB-GAM).</title>
        <authorList>
            <person name="Imai S."/>
            <person name="Kaksonen M."/>
            <person name="Raulo E."/>
            <person name="Kinnunen T."/>
            <person name="Fages C."/>
            <person name="Meng X."/>
            <person name="Lakso M."/>
            <person name="Rauvala H."/>
        </authorList>
    </citation>
    <scope>INTERACTION WITH PTN</scope>
</reference>
<proteinExistence type="evidence at protein level"/>
<dbReference type="EMBL" id="U52825">
    <property type="protein sequence ID" value="AAB03284.1"/>
    <property type="molecule type" value="mRNA"/>
</dbReference>
<dbReference type="EMBL" id="U73184">
    <property type="protein sequence ID" value="AAB18192.1"/>
    <property type="molecule type" value="mRNA"/>
</dbReference>
<dbReference type="EMBL" id="X63143">
    <property type="protein sequence ID" value="CAA44848.1"/>
    <property type="molecule type" value="mRNA"/>
</dbReference>
<dbReference type="PIR" id="A41558">
    <property type="entry name" value="A41558"/>
</dbReference>
<dbReference type="RefSeq" id="NP_446345.3">
    <property type="nucleotide sequence ID" value="NM_053893.3"/>
</dbReference>
<dbReference type="SMR" id="P33671"/>
<dbReference type="BioGRID" id="250556">
    <property type="interactions" value="4"/>
</dbReference>
<dbReference type="FunCoup" id="P33671">
    <property type="interactions" value="941"/>
</dbReference>
<dbReference type="IntAct" id="P33671">
    <property type="interactions" value="4"/>
</dbReference>
<dbReference type="STRING" id="10116.ENSRNOP00000041634"/>
<dbReference type="GlyCosmos" id="P33671">
    <property type="glycosylation" value="12 sites, No reported glycans"/>
</dbReference>
<dbReference type="GlyGen" id="P33671">
    <property type="glycosylation" value="15 sites"/>
</dbReference>
<dbReference type="iPTMnet" id="P33671"/>
<dbReference type="PhosphoSitePlus" id="P33671"/>
<dbReference type="PaxDb" id="10116-ENSRNOP00000041634"/>
<dbReference type="GeneID" id="116673"/>
<dbReference type="KEGG" id="rno:116673"/>
<dbReference type="UCSC" id="RGD:621486">
    <property type="organism name" value="rat"/>
</dbReference>
<dbReference type="AGR" id="RGD:621486"/>
<dbReference type="CTD" id="9672"/>
<dbReference type="RGD" id="621486">
    <property type="gene designation" value="Sdc3"/>
</dbReference>
<dbReference type="eggNOG" id="ENOG502QTD2">
    <property type="taxonomic scope" value="Eukaryota"/>
</dbReference>
<dbReference type="InParanoid" id="P33671"/>
<dbReference type="OrthoDB" id="10044468at2759"/>
<dbReference type="PhylomeDB" id="P33671"/>
<dbReference type="Reactome" id="R-RNO-1971475">
    <property type="pathway name" value="A tetrasaccharide linker sequence is required for GAG synthesis"/>
</dbReference>
<dbReference type="Reactome" id="R-RNO-2022928">
    <property type="pathway name" value="HS-GAG biosynthesis"/>
</dbReference>
<dbReference type="Reactome" id="R-RNO-2024096">
    <property type="pathway name" value="HS-GAG degradation"/>
</dbReference>
<dbReference type="Reactome" id="R-RNO-202733">
    <property type="pathway name" value="Cell surface interactions at the vascular wall"/>
</dbReference>
<dbReference type="Reactome" id="R-RNO-3000170">
    <property type="pathway name" value="Syndecan interactions"/>
</dbReference>
<dbReference type="Reactome" id="R-RNO-975634">
    <property type="pathway name" value="Retinoid metabolism and transport"/>
</dbReference>
<dbReference type="PRO" id="PR:P33671"/>
<dbReference type="Proteomes" id="UP000002494">
    <property type="component" value="Unplaced"/>
</dbReference>
<dbReference type="GO" id="GO:0030424">
    <property type="term" value="C:axon"/>
    <property type="evidence" value="ECO:0000314"/>
    <property type="project" value="RGD"/>
</dbReference>
<dbReference type="GO" id="GO:0009986">
    <property type="term" value="C:cell surface"/>
    <property type="evidence" value="ECO:0000318"/>
    <property type="project" value="GO_Central"/>
</dbReference>
<dbReference type="GO" id="GO:0016020">
    <property type="term" value="C:membrane"/>
    <property type="evidence" value="ECO:0000314"/>
    <property type="project" value="UniProtKB"/>
</dbReference>
<dbReference type="GO" id="GO:0044393">
    <property type="term" value="C:microspike"/>
    <property type="evidence" value="ECO:0000250"/>
    <property type="project" value="UniProtKB"/>
</dbReference>
<dbReference type="GO" id="GO:0005886">
    <property type="term" value="C:plasma membrane"/>
    <property type="evidence" value="ECO:0000314"/>
    <property type="project" value="UniProtKB"/>
</dbReference>
<dbReference type="GO" id="GO:0032991">
    <property type="term" value="C:protein-containing complex"/>
    <property type="evidence" value="ECO:0000314"/>
    <property type="project" value="RGD"/>
</dbReference>
<dbReference type="GO" id="GO:0042802">
    <property type="term" value="F:identical protein binding"/>
    <property type="evidence" value="ECO:0000266"/>
    <property type="project" value="RGD"/>
</dbReference>
<dbReference type="GO" id="GO:0007155">
    <property type="term" value="P:cell adhesion"/>
    <property type="evidence" value="ECO:0000314"/>
    <property type="project" value="RGD"/>
</dbReference>
<dbReference type="GO" id="GO:0016477">
    <property type="term" value="P:cell migration"/>
    <property type="evidence" value="ECO:0000318"/>
    <property type="project" value="GO_Central"/>
</dbReference>
<dbReference type="GO" id="GO:0030334">
    <property type="term" value="P:regulation of cell migration"/>
    <property type="evidence" value="ECO:0000314"/>
    <property type="project" value="CACAO"/>
</dbReference>
<dbReference type="InterPro" id="IPR003585">
    <property type="entry name" value="Neurexin-like"/>
</dbReference>
<dbReference type="InterPro" id="IPR001050">
    <property type="entry name" value="Syndecan"/>
</dbReference>
<dbReference type="InterPro" id="IPR027789">
    <property type="entry name" value="Syndecan/Neurexin_dom"/>
</dbReference>
<dbReference type="InterPro" id="IPR030479">
    <property type="entry name" value="Syndecan_CS"/>
</dbReference>
<dbReference type="PANTHER" id="PTHR10915">
    <property type="entry name" value="SYNDECAN"/>
    <property type="match status" value="1"/>
</dbReference>
<dbReference type="PANTHER" id="PTHR10915:SF7">
    <property type="entry name" value="SYNDECAN-3"/>
    <property type="match status" value="1"/>
</dbReference>
<dbReference type="Pfam" id="PF01034">
    <property type="entry name" value="Syndecan"/>
    <property type="match status" value="1"/>
</dbReference>
<dbReference type="SMART" id="SM00294">
    <property type="entry name" value="4.1m"/>
    <property type="match status" value="1"/>
</dbReference>
<dbReference type="PROSITE" id="PS00964">
    <property type="entry name" value="SYNDECAN"/>
    <property type="match status" value="1"/>
</dbReference>
<name>SDC3_RAT</name>
<feature type="signal peptide" evidence="3">
    <location>
        <begin position="1"/>
        <end position="44"/>
    </location>
</feature>
<feature type="chain" id="PRO_0000033509" description="Syndecan-3">
    <location>
        <begin position="45"/>
        <end position="442"/>
    </location>
</feature>
<feature type="topological domain" description="Extracellular" evidence="3">
    <location>
        <begin position="45"/>
        <end position="387"/>
    </location>
</feature>
<feature type="transmembrane region" description="Helical" evidence="3">
    <location>
        <begin position="388"/>
        <end position="408"/>
    </location>
</feature>
<feature type="topological domain" description="Cytoplasmic" evidence="3">
    <location>
        <begin position="409"/>
        <end position="442"/>
    </location>
</feature>
<feature type="region of interest" description="Disordered" evidence="4">
    <location>
        <begin position="1"/>
        <end position="25"/>
    </location>
</feature>
<feature type="region of interest" description="Disordered" evidence="4">
    <location>
        <begin position="55"/>
        <end position="85"/>
    </location>
</feature>
<feature type="region of interest" description="Disordered" evidence="4">
    <location>
        <begin position="151"/>
        <end position="175"/>
    </location>
</feature>
<feature type="region of interest" description="Disordered" evidence="4">
    <location>
        <begin position="180"/>
        <end position="199"/>
    </location>
</feature>
<feature type="region of interest" description="Disordered" evidence="4">
    <location>
        <begin position="225"/>
        <end position="244"/>
    </location>
</feature>
<feature type="region of interest" description="Disordered" evidence="4">
    <location>
        <begin position="252"/>
        <end position="327"/>
    </location>
</feature>
<feature type="region of interest" description="Disordered" evidence="4">
    <location>
        <begin position="339"/>
        <end position="372"/>
    </location>
</feature>
<feature type="region of interest" description="Disordered" evidence="4">
    <location>
        <begin position="419"/>
        <end position="442"/>
    </location>
</feature>
<feature type="compositionally biased region" description="Acidic residues" evidence="4">
    <location>
        <begin position="61"/>
        <end position="75"/>
    </location>
</feature>
<feature type="compositionally biased region" description="Low complexity" evidence="4">
    <location>
        <begin position="157"/>
        <end position="175"/>
    </location>
</feature>
<feature type="compositionally biased region" description="Low complexity" evidence="4">
    <location>
        <begin position="276"/>
        <end position="287"/>
    </location>
</feature>
<feature type="compositionally biased region" description="Polar residues" evidence="4">
    <location>
        <begin position="289"/>
        <end position="303"/>
    </location>
</feature>
<feature type="compositionally biased region" description="Basic and acidic residues" evidence="4">
    <location>
        <begin position="433"/>
        <end position="442"/>
    </location>
</feature>
<feature type="site" description="Cleavage of ectodomain" evidence="3">
    <location>
        <begin position="383"/>
        <end position="384"/>
    </location>
</feature>
<feature type="modified residue" description="Phosphotyrosine" evidence="2">
    <location>
        <position position="409"/>
    </location>
</feature>
<feature type="modified residue" description="Phosphotyrosine" evidence="2">
    <location>
        <position position="419"/>
    </location>
</feature>
<feature type="modified residue" description="Phosphotyrosine" evidence="2">
    <location>
        <position position="431"/>
    </location>
</feature>
<feature type="modified residue" description="Phosphotyrosine" evidence="2">
    <location>
        <position position="441"/>
    </location>
</feature>
<feature type="glycosylation site" description="O-linked (Xyl...) (glycosaminoglycan) serine" evidence="3">
    <location>
        <position position="78"/>
    </location>
</feature>
<feature type="glycosylation site" description="O-linked (Xyl...) (glycosaminoglycan) serine" evidence="3">
    <location>
        <position position="80"/>
    </location>
</feature>
<feature type="glycosylation site" description="O-linked (Xyl...) (glycosaminoglycan) serine" evidence="3">
    <location>
        <position position="82"/>
    </location>
</feature>
<feature type="glycosylation site" description="O-linked (Xyl...) (glycosaminoglycan) serine" evidence="3">
    <location>
        <position position="89"/>
    </location>
</feature>
<feature type="glycosylation site" description="O-linked (GalNAc) threonine; by GALNT13" evidence="2">
    <location>
        <position position="107"/>
    </location>
</feature>
<feature type="glycosylation site" description="O-linked (GalNAc) serine; by GALNT13" evidence="2">
    <location>
        <position position="161"/>
    </location>
</feature>
<feature type="glycosylation site" description="O-linked (GalNAc) threonine; by GALNT13" evidence="2">
    <location>
        <position position="162"/>
    </location>
</feature>
<feature type="glycosylation site" description="O-linked (GalNAc) threonine; by GALNT13" evidence="2">
    <location>
        <position position="163"/>
    </location>
</feature>
<feature type="glycosylation site" description="O-linked (GalNAc) threonine; by GALNT13" evidence="2">
    <location>
        <position position="170"/>
    </location>
</feature>
<feature type="glycosylation site" description="O-linked (GalNAc) threonine; by GALNT13" evidence="2">
    <location>
        <position position="172"/>
    </location>
</feature>
<feature type="glycosylation site" description="O-linked (Xyl...) (glycosaminoglycan) serine" evidence="3">
    <location>
        <position position="315"/>
    </location>
</feature>
<feature type="glycosylation site" description="O-linked (Xyl...) (glycosaminoglycan) serine" evidence="3">
    <location>
        <position position="367"/>
    </location>
</feature>
<feature type="sequence conflict" description="In Ref. 1; AAB03284." evidence="8" ref="1">
    <original>Q</original>
    <variation>E</variation>
    <location>
        <position position="14"/>
    </location>
</feature>
<feature type="sequence conflict" description="In Ref. 1; AAB03284." evidence="8" ref="1">
    <original>Q</original>
    <variation>E</variation>
    <location>
        <position position="87"/>
    </location>
</feature>
<feature type="sequence conflict" description="In Ref. 3." evidence="8" ref="3">
    <original>GL</original>
    <variation>LR</variation>
    <location>
        <begin position="90"/>
        <end position="91"/>
    </location>
</feature>
<feature type="sequence conflict" description="In Ref. 1." evidence="8" ref="1">
    <original>T</original>
    <variation>S</variation>
    <location>
        <position position="176"/>
    </location>
</feature>
<feature type="sequence conflict" description="In Ref. 1." evidence="8" ref="1">
    <original>A</original>
    <variation>D</variation>
    <location>
        <position position="178"/>
    </location>
</feature>
<feature type="sequence conflict" description="In Ref. 1; AAB03284." evidence="8" ref="1">
    <original>A</original>
    <variation>G</variation>
    <location>
        <position position="184"/>
    </location>
</feature>
<feature type="sequence conflict" description="In Ref. 1; AAB03284." evidence="8" ref="1">
    <original>T</original>
    <variation>S</variation>
    <location>
        <position position="238"/>
    </location>
</feature>
<feature type="sequence conflict" description="In Ref. 1; AAB03284." evidence="8" ref="1">
    <original>E</original>
    <variation>V</variation>
    <location>
        <position position="270"/>
    </location>
</feature>
<gene>
    <name type="primary">Sdc3</name>
    <name type="synonym">Synd3</name>
</gene>